<sequence>MQATNPIWAEVQQSLQKTLSKPSFETWIRPAKFNCFENGLLTLIAPNTFSSDWLRKNYCETIEKAAKEICGHDVKVVFKSETNTSSDLSNEDKANEKNVHHKTRSFSSNNQNNSSKNQFKNPNGLNLRYVFKRFVVGPNSRLAHAAALAVAESPGREFNPLFICGGVGLGKTHLMQAIGHYRVEIDPEAKVKYVSTETFTNDVISGIRRDGMTAIRDKYRNVDLILIDDIQFLEGKEYTQEEFFHTFNALHESGSQIVIASDRPPNQLSGIQERLISRFSMGMTADIQPPDLETRTAILQKKAEQERMSLPRDLIQFIAGRFTSNIRELEGAFTRAVAFASITGLPMTVQSIAPMLDPNSVGVVVTPKQVINKVSDFFKVSTDELISSSRRKPVSQARQIGMYLMRHGTDLSLPRIGDEFGGKDHTTVMYAIEQVEKKLSIDPNIASQVQKIRDLLQIDSRKNL</sequence>
<comment type="function">
    <text evidence="1">Plays an essential role in the initiation and regulation of chromosomal replication. ATP-DnaA binds to the origin of replication (oriC) to initiate formation of the DNA replication initiation complex once per cell cycle. Binds the DnaA box (a 9 base pair repeat at the origin) and separates the double-stranded (ds)DNA. Forms a right-handed helical filament on oriC DNA; dsDNA binds to the exterior of the filament while single-stranded (ss)DNA is stabiized in the filament's interior. The ATP-DnaA-oriC complex binds and stabilizes one strand of the AT-rich DNA unwinding element (DUE), permitting loading of DNA polymerase. After initiation quickly degrades to an ADP-DnaA complex that is not apt for DNA replication. Binds acidic phospholipids.</text>
</comment>
<comment type="subunit">
    <text evidence="1">Oligomerizes as a right-handed, spiral filament on DNA at oriC.</text>
</comment>
<comment type="subcellular location">
    <subcellularLocation>
        <location evidence="1">Cytoplasm</location>
    </subcellularLocation>
</comment>
<comment type="domain">
    <text evidence="1">Domain I is involved in oligomerization and binding regulators, domain II is flexibile and of varying length in different bacteria, domain III forms the AAA+ region, while domain IV binds dsDNA.</text>
</comment>
<comment type="similarity">
    <text evidence="1">Belongs to the DnaA family.</text>
</comment>
<organism>
    <name type="scientific">Prochlorococcus marinus (strain AS9601)</name>
    <dbReference type="NCBI Taxonomy" id="146891"/>
    <lineage>
        <taxon>Bacteria</taxon>
        <taxon>Bacillati</taxon>
        <taxon>Cyanobacteriota</taxon>
        <taxon>Cyanophyceae</taxon>
        <taxon>Synechococcales</taxon>
        <taxon>Prochlorococcaceae</taxon>
        <taxon>Prochlorococcus</taxon>
    </lineage>
</organism>
<proteinExistence type="inferred from homology"/>
<protein>
    <recommendedName>
        <fullName evidence="1">Chromosomal replication initiator protein DnaA</fullName>
    </recommendedName>
</protein>
<dbReference type="EMBL" id="CP000551">
    <property type="protein sequence ID" value="ABM69907.1"/>
    <property type="molecule type" value="Genomic_DNA"/>
</dbReference>
<dbReference type="RefSeq" id="WP_011818069.1">
    <property type="nucleotide sequence ID" value="NC_008816.1"/>
</dbReference>
<dbReference type="SMR" id="A2BQ46"/>
<dbReference type="STRING" id="146891.A9601_06211"/>
<dbReference type="KEGG" id="pmb:A9601_06211"/>
<dbReference type="eggNOG" id="COG0593">
    <property type="taxonomic scope" value="Bacteria"/>
</dbReference>
<dbReference type="HOGENOM" id="CLU_026910_3_1_3"/>
<dbReference type="OrthoDB" id="9807019at2"/>
<dbReference type="Proteomes" id="UP000002590">
    <property type="component" value="Chromosome"/>
</dbReference>
<dbReference type="GO" id="GO:0005737">
    <property type="term" value="C:cytoplasm"/>
    <property type="evidence" value="ECO:0007669"/>
    <property type="project" value="UniProtKB-SubCell"/>
</dbReference>
<dbReference type="GO" id="GO:0005886">
    <property type="term" value="C:plasma membrane"/>
    <property type="evidence" value="ECO:0007669"/>
    <property type="project" value="TreeGrafter"/>
</dbReference>
<dbReference type="GO" id="GO:0005524">
    <property type="term" value="F:ATP binding"/>
    <property type="evidence" value="ECO:0007669"/>
    <property type="project" value="UniProtKB-UniRule"/>
</dbReference>
<dbReference type="GO" id="GO:0016887">
    <property type="term" value="F:ATP hydrolysis activity"/>
    <property type="evidence" value="ECO:0007669"/>
    <property type="project" value="InterPro"/>
</dbReference>
<dbReference type="GO" id="GO:0003688">
    <property type="term" value="F:DNA replication origin binding"/>
    <property type="evidence" value="ECO:0007669"/>
    <property type="project" value="UniProtKB-UniRule"/>
</dbReference>
<dbReference type="GO" id="GO:0008289">
    <property type="term" value="F:lipid binding"/>
    <property type="evidence" value="ECO:0007669"/>
    <property type="project" value="UniProtKB-KW"/>
</dbReference>
<dbReference type="GO" id="GO:0006270">
    <property type="term" value="P:DNA replication initiation"/>
    <property type="evidence" value="ECO:0007669"/>
    <property type="project" value="UniProtKB-UniRule"/>
</dbReference>
<dbReference type="GO" id="GO:0006275">
    <property type="term" value="P:regulation of DNA replication"/>
    <property type="evidence" value="ECO:0007669"/>
    <property type="project" value="UniProtKB-UniRule"/>
</dbReference>
<dbReference type="CDD" id="cd00009">
    <property type="entry name" value="AAA"/>
    <property type="match status" value="1"/>
</dbReference>
<dbReference type="CDD" id="cd06571">
    <property type="entry name" value="Bac_DnaA_C"/>
    <property type="match status" value="1"/>
</dbReference>
<dbReference type="FunFam" id="3.40.50.300:FF:000668">
    <property type="entry name" value="Chromosomal replication initiator protein DnaA"/>
    <property type="match status" value="1"/>
</dbReference>
<dbReference type="Gene3D" id="1.10.1750.10">
    <property type="match status" value="1"/>
</dbReference>
<dbReference type="Gene3D" id="1.10.8.60">
    <property type="match status" value="1"/>
</dbReference>
<dbReference type="Gene3D" id="3.30.300.180">
    <property type="match status" value="1"/>
</dbReference>
<dbReference type="Gene3D" id="3.40.50.300">
    <property type="entry name" value="P-loop containing nucleotide triphosphate hydrolases"/>
    <property type="match status" value="1"/>
</dbReference>
<dbReference type="HAMAP" id="MF_00377">
    <property type="entry name" value="DnaA_bact"/>
    <property type="match status" value="1"/>
</dbReference>
<dbReference type="InterPro" id="IPR003593">
    <property type="entry name" value="AAA+_ATPase"/>
</dbReference>
<dbReference type="InterPro" id="IPR001957">
    <property type="entry name" value="Chromosome_initiator_DnaA"/>
</dbReference>
<dbReference type="InterPro" id="IPR020591">
    <property type="entry name" value="Chromosome_initiator_DnaA-like"/>
</dbReference>
<dbReference type="InterPro" id="IPR018312">
    <property type="entry name" value="Chromosome_initiator_DnaA_CS"/>
</dbReference>
<dbReference type="InterPro" id="IPR013159">
    <property type="entry name" value="DnaA_C"/>
</dbReference>
<dbReference type="InterPro" id="IPR013317">
    <property type="entry name" value="DnaA_dom"/>
</dbReference>
<dbReference type="InterPro" id="IPR024633">
    <property type="entry name" value="DnaA_N_dom"/>
</dbReference>
<dbReference type="InterPro" id="IPR038454">
    <property type="entry name" value="DnaA_N_sf"/>
</dbReference>
<dbReference type="InterPro" id="IPR027417">
    <property type="entry name" value="P-loop_NTPase"/>
</dbReference>
<dbReference type="InterPro" id="IPR010921">
    <property type="entry name" value="Trp_repressor/repl_initiator"/>
</dbReference>
<dbReference type="NCBIfam" id="TIGR00362">
    <property type="entry name" value="DnaA"/>
    <property type="match status" value="1"/>
</dbReference>
<dbReference type="PANTHER" id="PTHR30050">
    <property type="entry name" value="CHROMOSOMAL REPLICATION INITIATOR PROTEIN DNAA"/>
    <property type="match status" value="1"/>
</dbReference>
<dbReference type="PANTHER" id="PTHR30050:SF2">
    <property type="entry name" value="CHROMOSOMAL REPLICATION INITIATOR PROTEIN DNAA"/>
    <property type="match status" value="1"/>
</dbReference>
<dbReference type="Pfam" id="PF00308">
    <property type="entry name" value="Bac_DnaA"/>
    <property type="match status" value="1"/>
</dbReference>
<dbReference type="Pfam" id="PF08299">
    <property type="entry name" value="Bac_DnaA_C"/>
    <property type="match status" value="1"/>
</dbReference>
<dbReference type="Pfam" id="PF11638">
    <property type="entry name" value="DnaA_N"/>
    <property type="match status" value="1"/>
</dbReference>
<dbReference type="PRINTS" id="PR00051">
    <property type="entry name" value="DNAA"/>
</dbReference>
<dbReference type="SMART" id="SM00382">
    <property type="entry name" value="AAA"/>
    <property type="match status" value="1"/>
</dbReference>
<dbReference type="SMART" id="SM00760">
    <property type="entry name" value="Bac_DnaA_C"/>
    <property type="match status" value="1"/>
</dbReference>
<dbReference type="SUPFAM" id="SSF52540">
    <property type="entry name" value="P-loop containing nucleoside triphosphate hydrolases"/>
    <property type="match status" value="1"/>
</dbReference>
<dbReference type="SUPFAM" id="SSF48295">
    <property type="entry name" value="TrpR-like"/>
    <property type="match status" value="1"/>
</dbReference>
<dbReference type="PROSITE" id="PS01008">
    <property type="entry name" value="DNAA"/>
    <property type="match status" value="1"/>
</dbReference>
<evidence type="ECO:0000255" key="1">
    <source>
        <dbReference type="HAMAP-Rule" id="MF_00377"/>
    </source>
</evidence>
<evidence type="ECO:0000256" key="2">
    <source>
        <dbReference type="SAM" id="MobiDB-lite"/>
    </source>
</evidence>
<name>DNAA_PROMS</name>
<gene>
    <name evidence="1" type="primary">dnaA</name>
    <name type="ordered locus">A9601_06211</name>
</gene>
<reference key="1">
    <citation type="journal article" date="2007" name="PLoS Genet.">
        <title>Patterns and implications of gene gain and loss in the evolution of Prochlorococcus.</title>
        <authorList>
            <person name="Kettler G.C."/>
            <person name="Martiny A.C."/>
            <person name="Huang K."/>
            <person name="Zucker J."/>
            <person name="Coleman M.L."/>
            <person name="Rodrigue S."/>
            <person name="Chen F."/>
            <person name="Lapidus A."/>
            <person name="Ferriera S."/>
            <person name="Johnson J."/>
            <person name="Steglich C."/>
            <person name="Church G.M."/>
            <person name="Richardson P."/>
            <person name="Chisholm S.W."/>
        </authorList>
    </citation>
    <scope>NUCLEOTIDE SEQUENCE [LARGE SCALE GENOMIC DNA]</scope>
    <source>
        <strain>AS9601</strain>
    </source>
</reference>
<feature type="chain" id="PRO_1000048690" description="Chromosomal replication initiator protein DnaA">
    <location>
        <begin position="1"/>
        <end position="464"/>
    </location>
</feature>
<feature type="region of interest" description="Domain I, interacts with DnaA modulators" evidence="1">
    <location>
        <begin position="1"/>
        <end position="79"/>
    </location>
</feature>
<feature type="region of interest" description="Domain II" evidence="1">
    <location>
        <begin position="79"/>
        <end position="123"/>
    </location>
</feature>
<feature type="region of interest" description="Disordered" evidence="2">
    <location>
        <begin position="84"/>
        <end position="121"/>
    </location>
</feature>
<feature type="region of interest" description="Domain III, AAA+ region" evidence="1">
    <location>
        <begin position="124"/>
        <end position="340"/>
    </location>
</feature>
<feature type="region of interest" description="Domain IV, binds dsDNA" evidence="1">
    <location>
        <begin position="341"/>
        <end position="464"/>
    </location>
</feature>
<feature type="compositionally biased region" description="Low complexity" evidence="2">
    <location>
        <begin position="105"/>
        <end position="121"/>
    </location>
</feature>
<feature type="binding site" evidence="1">
    <location>
        <position position="168"/>
    </location>
    <ligand>
        <name>ATP</name>
        <dbReference type="ChEBI" id="CHEBI:30616"/>
    </ligand>
</feature>
<feature type="binding site" evidence="1">
    <location>
        <position position="170"/>
    </location>
    <ligand>
        <name>ATP</name>
        <dbReference type="ChEBI" id="CHEBI:30616"/>
    </ligand>
</feature>
<feature type="binding site" evidence="1">
    <location>
        <position position="171"/>
    </location>
    <ligand>
        <name>ATP</name>
        <dbReference type="ChEBI" id="CHEBI:30616"/>
    </ligand>
</feature>
<feature type="binding site" evidence="1">
    <location>
        <position position="172"/>
    </location>
    <ligand>
        <name>ATP</name>
        <dbReference type="ChEBI" id="CHEBI:30616"/>
    </ligand>
</feature>
<accession>A2BQ46</accession>
<keyword id="KW-0067">ATP-binding</keyword>
<keyword id="KW-0963">Cytoplasm</keyword>
<keyword id="KW-0235">DNA replication</keyword>
<keyword id="KW-0238">DNA-binding</keyword>
<keyword id="KW-0446">Lipid-binding</keyword>
<keyword id="KW-0547">Nucleotide-binding</keyword>